<proteinExistence type="evidence at protein level"/>
<accession>Q9JIR4</accession>
<accession>O35168</accession>
<feature type="chain" id="PRO_0000190200" description="Regulating synaptic membrane exocytosis protein 1">
    <location>
        <begin position="1"/>
        <end position="1615"/>
    </location>
</feature>
<feature type="domain" description="RabBD" evidence="7">
    <location>
        <begin position="22"/>
        <end position="205"/>
    </location>
</feature>
<feature type="domain" description="PDZ" evidence="6">
    <location>
        <begin position="619"/>
        <end position="705"/>
    </location>
</feature>
<feature type="domain" description="C2 1" evidence="4">
    <location>
        <begin position="756"/>
        <end position="879"/>
    </location>
</feature>
<feature type="domain" description="C2 2" evidence="4">
    <location>
        <begin position="1461"/>
        <end position="1579"/>
    </location>
</feature>
<feature type="zinc finger region" description="FYVE-type" evidence="5">
    <location>
        <begin position="133"/>
        <end position="193"/>
    </location>
</feature>
<feature type="region of interest" description="Disordered" evidence="8">
    <location>
        <begin position="1"/>
        <end position="26"/>
    </location>
</feature>
<feature type="region of interest" description="Disordered" evidence="8">
    <location>
        <begin position="205"/>
        <end position="569"/>
    </location>
</feature>
<feature type="region of interest" description="Disordered" evidence="8">
    <location>
        <begin position="712"/>
        <end position="746"/>
    </location>
</feature>
<feature type="region of interest" description="Disordered" evidence="8">
    <location>
        <begin position="884"/>
        <end position="1201"/>
    </location>
</feature>
<feature type="region of interest" description="Disordered" evidence="8">
    <location>
        <begin position="1256"/>
        <end position="1313"/>
    </location>
</feature>
<feature type="region of interest" description="Disordered" evidence="8">
    <location>
        <begin position="1368"/>
        <end position="1397"/>
    </location>
</feature>
<feature type="compositionally biased region" description="Pro residues" evidence="8">
    <location>
        <begin position="9"/>
        <end position="20"/>
    </location>
</feature>
<feature type="compositionally biased region" description="Polar residues" evidence="8">
    <location>
        <begin position="206"/>
        <end position="222"/>
    </location>
</feature>
<feature type="compositionally biased region" description="Basic and acidic residues" evidence="8">
    <location>
        <begin position="227"/>
        <end position="240"/>
    </location>
</feature>
<feature type="compositionally biased region" description="Polar residues" evidence="8">
    <location>
        <begin position="241"/>
        <end position="256"/>
    </location>
</feature>
<feature type="compositionally biased region" description="Basic and acidic residues" evidence="8">
    <location>
        <begin position="327"/>
        <end position="379"/>
    </location>
</feature>
<feature type="compositionally biased region" description="Basic residues" evidence="8">
    <location>
        <begin position="399"/>
        <end position="410"/>
    </location>
</feature>
<feature type="compositionally biased region" description="Low complexity" evidence="8">
    <location>
        <begin position="421"/>
        <end position="459"/>
    </location>
</feature>
<feature type="compositionally biased region" description="Pro residues" evidence="8">
    <location>
        <begin position="460"/>
        <end position="475"/>
    </location>
</feature>
<feature type="compositionally biased region" description="Basic and acidic residues" evidence="8">
    <location>
        <begin position="476"/>
        <end position="489"/>
    </location>
</feature>
<feature type="compositionally biased region" description="Polar residues" evidence="8">
    <location>
        <begin position="511"/>
        <end position="523"/>
    </location>
</feature>
<feature type="compositionally biased region" description="Basic residues" evidence="8">
    <location>
        <begin position="529"/>
        <end position="541"/>
    </location>
</feature>
<feature type="compositionally biased region" description="Acidic residues" evidence="8">
    <location>
        <begin position="559"/>
        <end position="569"/>
    </location>
</feature>
<feature type="compositionally biased region" description="Low complexity" evidence="8">
    <location>
        <begin position="714"/>
        <end position="730"/>
    </location>
</feature>
<feature type="compositionally biased region" description="Polar residues" evidence="8">
    <location>
        <begin position="949"/>
        <end position="958"/>
    </location>
</feature>
<feature type="compositionally biased region" description="Basic and acidic residues" evidence="8">
    <location>
        <begin position="1006"/>
        <end position="1023"/>
    </location>
</feature>
<feature type="compositionally biased region" description="Basic and acidic residues" evidence="8">
    <location>
        <begin position="1078"/>
        <end position="1092"/>
    </location>
</feature>
<feature type="compositionally biased region" description="Polar residues" evidence="8">
    <location>
        <begin position="1173"/>
        <end position="1187"/>
    </location>
</feature>
<feature type="compositionally biased region" description="Low complexity" evidence="8">
    <location>
        <begin position="1268"/>
        <end position="1289"/>
    </location>
</feature>
<feature type="binding site" evidence="5">
    <location>
        <position position="139"/>
    </location>
    <ligand>
        <name>Zn(2+)</name>
        <dbReference type="ChEBI" id="CHEBI:29105"/>
        <label>1</label>
    </ligand>
</feature>
<feature type="binding site" evidence="5">
    <location>
        <position position="142"/>
    </location>
    <ligand>
        <name>Zn(2+)</name>
        <dbReference type="ChEBI" id="CHEBI:29105"/>
        <label>1</label>
    </ligand>
</feature>
<feature type="binding site" evidence="5">
    <location>
        <position position="155"/>
    </location>
    <ligand>
        <name>Zn(2+)</name>
        <dbReference type="ChEBI" id="CHEBI:29105"/>
        <label>2</label>
    </ligand>
</feature>
<feature type="binding site" evidence="5">
    <location>
        <position position="158"/>
    </location>
    <ligand>
        <name>Zn(2+)</name>
        <dbReference type="ChEBI" id="CHEBI:29105"/>
        <label>2</label>
    </ligand>
</feature>
<feature type="binding site" evidence="5">
    <location>
        <position position="163"/>
    </location>
    <ligand>
        <name>Zn(2+)</name>
        <dbReference type="ChEBI" id="CHEBI:29105"/>
        <label>1</label>
    </ligand>
</feature>
<feature type="binding site" evidence="5">
    <location>
        <position position="166"/>
    </location>
    <ligand>
        <name>Zn(2+)</name>
        <dbReference type="ChEBI" id="CHEBI:29105"/>
        <label>1</label>
    </ligand>
</feature>
<feature type="binding site" evidence="5">
    <location>
        <position position="185"/>
    </location>
    <ligand>
        <name>Zn(2+)</name>
        <dbReference type="ChEBI" id="CHEBI:29105"/>
        <label>2</label>
    </ligand>
</feature>
<feature type="binding site" evidence="5">
    <location>
        <position position="188"/>
    </location>
    <ligand>
        <name>Zn(2+)</name>
        <dbReference type="ChEBI" id="CHEBI:29105"/>
        <label>2</label>
    </ligand>
</feature>
<feature type="modified residue" description="Phosphoserine" evidence="17">
    <location>
        <position position="514"/>
    </location>
</feature>
<feature type="modified residue" description="Phosphoserine" evidence="17">
    <location>
        <position position="592"/>
    </location>
</feature>
<feature type="modified residue" description="Phosphoserine" evidence="17">
    <location>
        <position position="742"/>
    </location>
</feature>
<feature type="modified residue" description="Phosphoserine" evidence="3">
    <location>
        <position position="745"/>
    </location>
</feature>
<feature type="modified residue" description="Phosphoserine" evidence="3">
    <location>
        <position position="895"/>
    </location>
</feature>
<feature type="modified residue" description="Phosphoserine" evidence="17">
    <location>
        <position position="991"/>
    </location>
</feature>
<feature type="modified residue" description="Phosphoserine" evidence="3">
    <location>
        <position position="1045"/>
    </location>
</feature>
<feature type="modified residue" description="Phosphoserine" evidence="17">
    <location>
        <position position="1175"/>
    </location>
</feature>
<feature type="modified residue" description="Phosphothreonine" evidence="17">
    <location>
        <position position="1177"/>
    </location>
</feature>
<feature type="modified residue" description="Phosphoserine" evidence="17">
    <location>
        <position position="1179"/>
    </location>
</feature>
<feature type="modified residue" description="Phosphoserine" evidence="17">
    <location>
        <position position="1231"/>
    </location>
</feature>
<feature type="modified residue" description="Phosphoserine" evidence="17">
    <location>
        <position position="1233"/>
    </location>
</feature>
<feature type="modified residue" description="Phosphoserine" evidence="17">
    <location>
        <position position="1234"/>
    </location>
</feature>
<feature type="modified residue" description="Phosphoserine" evidence="3">
    <location>
        <position position="1262"/>
    </location>
</feature>
<feature type="modified residue" description="Phosphoserine" evidence="3">
    <location>
        <position position="1263"/>
    </location>
</feature>
<feature type="modified residue" description="Phosphoserine" evidence="3">
    <location>
        <position position="1265"/>
    </location>
</feature>
<feature type="modified residue" description="Phosphoserine" evidence="17">
    <location>
        <position position="1339"/>
    </location>
</feature>
<feature type="modified residue" description="Phosphoserine" evidence="17">
    <location>
        <position position="1600"/>
    </location>
</feature>
<feature type="modified residue" description="Phosphoserine" evidence="17">
    <location>
        <position position="1603"/>
    </location>
</feature>
<feature type="modified residue" description="Phosphoserine" evidence="2">
    <location>
        <position position="1606"/>
    </location>
</feature>
<feature type="modified residue" description="Phosphoserine" evidence="2">
    <location>
        <position position="1615"/>
    </location>
</feature>
<feature type="splice variant" id="VSP_008172" description="In isoform 2." evidence="15">
    <location>
        <begin position="1107"/>
        <end position="1168"/>
    </location>
</feature>
<feature type="strand" evidence="18">
    <location>
        <begin position="600"/>
        <end position="603"/>
    </location>
</feature>
<feature type="strand" evidence="18">
    <location>
        <begin position="605"/>
        <end position="616"/>
    </location>
</feature>
<feature type="strand" evidence="18">
    <location>
        <begin position="623"/>
        <end position="625"/>
    </location>
</feature>
<feature type="strand" evidence="18">
    <location>
        <begin position="628"/>
        <end position="636"/>
    </location>
</feature>
<feature type="strand" evidence="18">
    <location>
        <begin position="641"/>
        <end position="643"/>
    </location>
</feature>
<feature type="strand" evidence="18">
    <location>
        <begin position="647"/>
        <end position="652"/>
    </location>
</feature>
<feature type="helix" evidence="18">
    <location>
        <begin position="657"/>
        <end position="660"/>
    </location>
</feature>
<feature type="strand" evidence="18">
    <location>
        <begin position="669"/>
        <end position="673"/>
    </location>
</feature>
<feature type="helix" evidence="18">
    <location>
        <begin position="683"/>
        <end position="694"/>
    </location>
</feature>
<feature type="strand" evidence="18">
    <location>
        <begin position="699"/>
        <end position="703"/>
    </location>
</feature>
<feature type="strand" evidence="19">
    <location>
        <begin position="1450"/>
        <end position="1453"/>
    </location>
</feature>
<feature type="turn" evidence="19">
    <location>
        <begin position="1456"/>
        <end position="1458"/>
    </location>
</feature>
<feature type="strand" evidence="19">
    <location>
        <begin position="1464"/>
        <end position="1472"/>
    </location>
</feature>
<feature type="strand" evidence="19">
    <location>
        <begin position="1475"/>
        <end position="1485"/>
    </location>
</feature>
<feature type="strand" evidence="19">
    <location>
        <begin position="1497"/>
        <end position="1506"/>
    </location>
</feature>
<feature type="strand" evidence="19">
    <location>
        <begin position="1509"/>
        <end position="1515"/>
    </location>
</feature>
<feature type="strand" evidence="19">
    <location>
        <begin position="1526"/>
        <end position="1532"/>
    </location>
</feature>
<feature type="strand" evidence="19">
    <location>
        <begin position="1540"/>
        <end position="1549"/>
    </location>
</feature>
<feature type="strand" evidence="19">
    <location>
        <begin position="1555"/>
        <end position="1564"/>
    </location>
</feature>
<feature type="helix" evidence="19">
    <location>
        <begin position="1566"/>
        <end position="1568"/>
    </location>
</feature>
<feature type="strand" evidence="19">
    <location>
        <begin position="1575"/>
        <end position="1580"/>
    </location>
</feature>
<feature type="helix" evidence="19">
    <location>
        <begin position="1584"/>
        <end position="1587"/>
    </location>
</feature>
<feature type="strand" evidence="19">
    <location>
        <begin position="1588"/>
        <end position="1592"/>
    </location>
</feature>
<evidence type="ECO:0000250" key="1"/>
<evidence type="ECO:0000250" key="2">
    <source>
        <dbReference type="UniProtKB" id="Q86UR5"/>
    </source>
</evidence>
<evidence type="ECO:0000250" key="3">
    <source>
        <dbReference type="UniProtKB" id="Q99NE5"/>
    </source>
</evidence>
<evidence type="ECO:0000255" key="4">
    <source>
        <dbReference type="PROSITE-ProRule" id="PRU00041"/>
    </source>
</evidence>
<evidence type="ECO:0000255" key="5">
    <source>
        <dbReference type="PROSITE-ProRule" id="PRU00091"/>
    </source>
</evidence>
<evidence type="ECO:0000255" key="6">
    <source>
        <dbReference type="PROSITE-ProRule" id="PRU00143"/>
    </source>
</evidence>
<evidence type="ECO:0000255" key="7">
    <source>
        <dbReference type="PROSITE-ProRule" id="PRU00234"/>
    </source>
</evidence>
<evidence type="ECO:0000256" key="8">
    <source>
        <dbReference type="SAM" id="MobiDB-lite"/>
    </source>
</evidence>
<evidence type="ECO:0000269" key="9">
    <source>
    </source>
</evidence>
<evidence type="ECO:0000269" key="10">
    <source>
    </source>
</evidence>
<evidence type="ECO:0000269" key="11">
    <source>
    </source>
</evidence>
<evidence type="ECO:0000269" key="12">
    <source>
    </source>
</evidence>
<evidence type="ECO:0000269" key="13">
    <source>
    </source>
</evidence>
<evidence type="ECO:0000269" key="14">
    <source>
    </source>
</evidence>
<evidence type="ECO:0000303" key="15">
    <source>
    </source>
</evidence>
<evidence type="ECO:0000305" key="16"/>
<evidence type="ECO:0007744" key="17">
    <source>
    </source>
</evidence>
<evidence type="ECO:0007829" key="18">
    <source>
        <dbReference type="PDB" id="1ZUB"/>
    </source>
</evidence>
<evidence type="ECO:0007829" key="19">
    <source>
        <dbReference type="PDB" id="2Q3X"/>
    </source>
</evidence>
<reference key="1">
    <citation type="journal article" date="1997" name="Nature">
        <title>Rim is a putative Rab3 effector in regulating synaptic-vesicle fusion.</title>
        <authorList>
            <person name="Wang Y."/>
            <person name="Okamoto M."/>
            <person name="Schmitz F."/>
            <person name="Hofmann K."/>
            <person name="Suedhof T.C."/>
        </authorList>
    </citation>
    <scope>NUCLEOTIDE SEQUENCE [MRNA] (ISOFORM 2)</scope>
    <scope>INTERACTION WITH RAB3A AND RAB3C</scope>
    <source>
        <tissue>Brain</tissue>
    </source>
</reference>
<reference key="2">
    <citation type="journal article" date="2000" name="J. Biol. Chem.">
        <title>The RIM/NIM family of neuronal C2 domain proteins. Interactions with Rab3 and a new class of Src homology 3 domain proteins.</title>
        <authorList>
            <person name="Wang Y."/>
            <person name="Sugita S."/>
            <person name="Suedhof T.C."/>
        </authorList>
    </citation>
    <scope>NUCLEOTIDE SEQUENCE [MRNA] (ISOFORM 1)</scope>
    <scope>ALTERNATIVE SPLICING</scope>
    <scope>TISSUE SPECIFICITY</scope>
    <scope>INTERACTION WITH RIM BINDING PROTEINS 1 AND 2</scope>
    <source>
        <tissue>Brain</tissue>
    </source>
</reference>
<reference key="3">
    <citation type="journal article" date="2002" name="Nature">
        <title>RIM1alpha forms a protein scaffold for regulating neurotransmitter release at the active zone.</title>
        <authorList>
            <person name="Schoch S."/>
            <person name="Castillo P.E."/>
            <person name="Jo T."/>
            <person name="Mukherjee K."/>
            <person name="Geppert M."/>
            <person name="Wang Y."/>
            <person name="Schmitz F."/>
            <person name="Malenka R.C."/>
            <person name="Suedhof T.C."/>
        </authorList>
    </citation>
    <scope>INTERACTION WITH PPFIA3 AND PPFIA4</scope>
    <source>
        <tissue>Brain</tissue>
    </source>
</reference>
<reference key="4">
    <citation type="journal article" date="2006" name="J. Biol. Chem.">
        <title>Binding to Rab3A-interacting molecule RIM regulates the presynaptic recruitment of Munc13-1 and ubMunc13-2.</title>
        <authorList>
            <person name="Andrews-Zwilling Y.S."/>
            <person name="Kawabe H."/>
            <person name="Reim K."/>
            <person name="Varoqueaux F."/>
            <person name="Brose N."/>
        </authorList>
    </citation>
    <scope>INTERACTION WITH UNC13A</scope>
</reference>
<reference key="5">
    <citation type="journal article" date="2006" name="Neuron">
        <title>SAD: a presynaptic kinase associated with synaptic vesicles and the active zone cytomatrix that regulates neurotransmitter release.</title>
        <authorList>
            <person name="Inoue E."/>
            <person name="Mochida S."/>
            <person name="Takagi H."/>
            <person name="Higa S."/>
            <person name="Deguchi-Tawarada M."/>
            <person name="Takao-Rikitsu E."/>
            <person name="Inoue M."/>
            <person name="Yao I."/>
            <person name="Takeuchi K."/>
            <person name="Kitajima I."/>
            <person name="Setou M."/>
            <person name="Ohtsuka T."/>
            <person name="Takai Y."/>
        </authorList>
    </citation>
    <scope>PHOSPHORYLATION BY BRSK1</scope>
</reference>
<reference key="6">
    <citation type="journal article" date="2006" name="Proc. Natl. Acad. Sci. U.S.A.">
        <title>Quantitative phosphoproteomics of vasopressin-sensitive renal cells: regulation of aquaporin-2 phosphorylation at two sites.</title>
        <authorList>
            <person name="Hoffert J.D."/>
            <person name="Pisitkun T."/>
            <person name="Wang G."/>
            <person name="Shen R.-F."/>
            <person name="Knepper M.A."/>
        </authorList>
    </citation>
    <scope>IDENTIFICATION BY MASS SPECTROMETRY [LARGE SCALE ANALYSIS]</scope>
</reference>
<reference key="7">
    <citation type="journal article" date="2012" name="Nat. Commun.">
        <title>Quantitative maps of protein phosphorylation sites across 14 different rat organs and tissues.</title>
        <authorList>
            <person name="Lundby A."/>
            <person name="Secher A."/>
            <person name="Lage K."/>
            <person name="Nordsborg N.B."/>
            <person name="Dmytriyev A."/>
            <person name="Lundby C."/>
            <person name="Olsen J.V."/>
        </authorList>
    </citation>
    <scope>PHOSPHORYLATION [LARGE SCALE ANALYSIS] AT SER-514; SER-592; SER-742; SER-991; SER-1175; THR-1177; SER-1179; SER-1231; SER-1233; SER-1234; SER-1339; SER-1600 AND SER-1603</scope>
    <scope>IDENTIFICATION BY MASS SPECTROMETRY [LARGE SCALE ANALYSIS]</scope>
</reference>
<reference key="8">
    <citation type="journal article" date="2005" name="J. Mol. Biol.">
        <title>Solution structure of the RIM1alpha PDZ domain in complex with an ELKS1b C-terminal peptide.</title>
        <authorList>
            <person name="Lu J."/>
            <person name="Li H."/>
            <person name="Wang Y."/>
            <person name="Sudhof T.C."/>
            <person name="Rizo J."/>
        </authorList>
    </citation>
    <scope>STRUCTURE BY NMR OF 597-705 IN COMPLEX WITH ERC1</scope>
    <scope>INTERACTION WITH ERC1</scope>
</reference>
<reference key="9">
    <citation type="journal article" date="2007" name="Biochemistry">
        <title>Crystal structure of the RIM1alpha C2B domain at 1.7 A resolution.</title>
        <authorList>
            <person name="Guan R."/>
            <person name="Dai H."/>
            <person name="Tomchick D.R."/>
            <person name="Dulubova I."/>
            <person name="Machius M."/>
            <person name="Sudhof T.C."/>
            <person name="Rizo J."/>
        </authorList>
    </citation>
    <scope>X-RAY CRYSTALLOGRAPHY (1.73 ANGSTROMS) OF 1447-1615</scope>
</reference>
<dbReference type="EMBL" id="AF007836">
    <property type="protein sequence ID" value="AAB66703.1"/>
    <property type="molecule type" value="mRNA"/>
</dbReference>
<dbReference type="EMBL" id="AF199333">
    <property type="protein sequence ID" value="AAF81655.1"/>
    <property type="molecule type" value="mRNA"/>
</dbReference>
<dbReference type="PIR" id="T03301">
    <property type="entry name" value="T03301"/>
</dbReference>
<dbReference type="RefSeq" id="NP_439894.1">
    <property type="nucleotide sequence ID" value="NM_052829.1"/>
</dbReference>
<dbReference type="PDB" id="1ZUB">
    <property type="method" value="NMR"/>
    <property type="chains" value="A=597-705"/>
</dbReference>
<dbReference type="PDB" id="2Q3X">
    <property type="method" value="X-ray"/>
    <property type="resolution" value="1.73 A"/>
    <property type="chains" value="A/B=1447-1615"/>
</dbReference>
<dbReference type="PDBsum" id="1ZUB"/>
<dbReference type="PDBsum" id="2Q3X"/>
<dbReference type="SMR" id="Q9JIR4"/>
<dbReference type="BioGRID" id="250003">
    <property type="interactions" value="2"/>
</dbReference>
<dbReference type="CORUM" id="Q9JIR4"/>
<dbReference type="DIP" id="DIP-41432N"/>
<dbReference type="ELM" id="Q9JIR4"/>
<dbReference type="FunCoup" id="Q9JIR4">
    <property type="interactions" value="1401"/>
</dbReference>
<dbReference type="IntAct" id="Q9JIR4">
    <property type="interactions" value="9"/>
</dbReference>
<dbReference type="MINT" id="Q9JIR4"/>
<dbReference type="STRING" id="10116.ENSRNOP00000068599"/>
<dbReference type="GlyGen" id="Q9JIR4">
    <property type="glycosylation" value="3 sites, 1 O-linked glycan (1 site)"/>
</dbReference>
<dbReference type="iPTMnet" id="Q9JIR4"/>
<dbReference type="PhosphoSitePlus" id="Q9JIR4"/>
<dbReference type="PaxDb" id="10116-ENSRNOP00000015454"/>
<dbReference type="GeneID" id="84556"/>
<dbReference type="KEGG" id="rno:84556"/>
<dbReference type="UCSC" id="RGD:620000">
    <molecule id="Q9JIR4-1"/>
    <property type="organism name" value="rat"/>
</dbReference>
<dbReference type="AGR" id="RGD:620000"/>
<dbReference type="CTD" id="22999"/>
<dbReference type="RGD" id="620000">
    <property type="gene designation" value="Rims1"/>
</dbReference>
<dbReference type="eggNOG" id="KOG2060">
    <property type="taxonomic scope" value="Eukaryota"/>
</dbReference>
<dbReference type="InParanoid" id="Q9JIR4"/>
<dbReference type="PhylomeDB" id="Q9JIR4"/>
<dbReference type="Reactome" id="R-RNO-181429">
    <property type="pathway name" value="Serotonin Neurotransmitter Release Cycle"/>
</dbReference>
<dbReference type="Reactome" id="R-RNO-181430">
    <property type="pathway name" value="Norepinephrine Neurotransmitter Release Cycle"/>
</dbReference>
<dbReference type="Reactome" id="R-RNO-210500">
    <property type="pathway name" value="Glutamate Neurotransmitter Release Cycle"/>
</dbReference>
<dbReference type="Reactome" id="R-RNO-212676">
    <property type="pathway name" value="Dopamine Neurotransmitter Release Cycle"/>
</dbReference>
<dbReference type="Reactome" id="R-RNO-264642">
    <property type="pathway name" value="Acetylcholine Neurotransmitter Release Cycle"/>
</dbReference>
<dbReference type="Reactome" id="R-RNO-888590">
    <property type="pathway name" value="GABA synthesis, release, reuptake and degradation"/>
</dbReference>
<dbReference type="CD-CODE" id="51D569B1">
    <property type="entry name" value="Synthetic Condensate 000294"/>
</dbReference>
<dbReference type="CD-CODE" id="F9F240AC">
    <property type="entry name" value="Presynaptic clusters"/>
</dbReference>
<dbReference type="EvolutionaryTrace" id="Q9JIR4"/>
<dbReference type="PRO" id="PR:Q9JIR4"/>
<dbReference type="Proteomes" id="UP000002494">
    <property type="component" value="Unplaced"/>
</dbReference>
<dbReference type="GO" id="GO:0042995">
    <property type="term" value="C:cell projection"/>
    <property type="evidence" value="ECO:0007669"/>
    <property type="project" value="UniProtKB-KW"/>
</dbReference>
<dbReference type="GO" id="GO:0098891">
    <property type="term" value="C:extrinsic component of presynaptic active zone membrane"/>
    <property type="evidence" value="ECO:0000266"/>
    <property type="project" value="RGD"/>
</dbReference>
<dbReference type="GO" id="GO:0098982">
    <property type="term" value="C:GABA-ergic synapse"/>
    <property type="evidence" value="ECO:0000266"/>
    <property type="project" value="RGD"/>
</dbReference>
<dbReference type="GO" id="GO:0098978">
    <property type="term" value="C:glutamatergic synapse"/>
    <property type="evidence" value="ECO:0000314"/>
    <property type="project" value="SynGO"/>
</dbReference>
<dbReference type="GO" id="GO:0060077">
    <property type="term" value="C:inhibitory synapse"/>
    <property type="evidence" value="ECO:0000266"/>
    <property type="project" value="RGD"/>
</dbReference>
<dbReference type="GO" id="GO:0005886">
    <property type="term" value="C:plasma membrane"/>
    <property type="evidence" value="ECO:0000316"/>
    <property type="project" value="ParkinsonsUK-UCL"/>
</dbReference>
<dbReference type="GO" id="GO:0014069">
    <property type="term" value="C:postsynaptic density"/>
    <property type="evidence" value="ECO:0000266"/>
    <property type="project" value="RGD"/>
</dbReference>
<dbReference type="GO" id="GO:0098831">
    <property type="term" value="C:presynaptic active zone cytoplasmic component"/>
    <property type="evidence" value="ECO:0000314"/>
    <property type="project" value="SynGO"/>
</dbReference>
<dbReference type="GO" id="GO:0042734">
    <property type="term" value="C:presynaptic membrane"/>
    <property type="evidence" value="ECO:0000314"/>
    <property type="project" value="UniProtKB"/>
</dbReference>
<dbReference type="GO" id="GO:0045202">
    <property type="term" value="C:synapse"/>
    <property type="evidence" value="ECO:0000266"/>
    <property type="project" value="RGD"/>
</dbReference>
<dbReference type="GO" id="GO:0031982">
    <property type="term" value="C:vesicle"/>
    <property type="evidence" value="ECO:0000266"/>
    <property type="project" value="RGD"/>
</dbReference>
<dbReference type="GO" id="GO:0019901">
    <property type="term" value="F:protein kinase binding"/>
    <property type="evidence" value="ECO:0000353"/>
    <property type="project" value="UniProtKB"/>
</dbReference>
<dbReference type="GO" id="GO:0017124">
    <property type="term" value="F:SH3 domain binding"/>
    <property type="evidence" value="ECO:0000353"/>
    <property type="project" value="RGD"/>
</dbReference>
<dbReference type="GO" id="GO:0031267">
    <property type="term" value="F:small GTPase binding"/>
    <property type="evidence" value="ECO:0000353"/>
    <property type="project" value="ParkinsonsUK-UCL"/>
</dbReference>
<dbReference type="GO" id="GO:0098882">
    <property type="term" value="F:structural constituent of presynaptic active zone"/>
    <property type="evidence" value="ECO:0000266"/>
    <property type="project" value="RGD"/>
</dbReference>
<dbReference type="GO" id="GO:0044325">
    <property type="term" value="F:transmembrane transporter binding"/>
    <property type="evidence" value="ECO:0000266"/>
    <property type="project" value="RGD"/>
</dbReference>
<dbReference type="GO" id="GO:0008270">
    <property type="term" value="F:zinc ion binding"/>
    <property type="evidence" value="ECO:0007669"/>
    <property type="project" value="UniProtKB-KW"/>
</dbReference>
<dbReference type="GO" id="GO:0060478">
    <property type="term" value="P:acrosomal vesicle exocytosis"/>
    <property type="evidence" value="ECO:0000266"/>
    <property type="project" value="RGD"/>
</dbReference>
<dbReference type="GO" id="GO:0048791">
    <property type="term" value="P:calcium ion-regulated exocytosis of neurotransmitter"/>
    <property type="evidence" value="ECO:0000266"/>
    <property type="project" value="RGD"/>
</dbReference>
<dbReference type="GO" id="GO:0030154">
    <property type="term" value="P:cell differentiation"/>
    <property type="evidence" value="ECO:0007669"/>
    <property type="project" value="UniProtKB-KW"/>
</dbReference>
<dbReference type="GO" id="GO:0006886">
    <property type="term" value="P:intracellular protein transport"/>
    <property type="evidence" value="ECO:0007669"/>
    <property type="project" value="InterPro"/>
</dbReference>
<dbReference type="GO" id="GO:0060291">
    <property type="term" value="P:long-term synaptic potentiation"/>
    <property type="evidence" value="ECO:0000315"/>
    <property type="project" value="RGD"/>
</dbReference>
<dbReference type="GO" id="GO:0007269">
    <property type="term" value="P:neurotransmitter secretion"/>
    <property type="evidence" value="ECO:0000266"/>
    <property type="project" value="RGD"/>
</dbReference>
<dbReference type="GO" id="GO:1903861">
    <property type="term" value="P:positive regulation of dendrite extension"/>
    <property type="evidence" value="ECO:0000266"/>
    <property type="project" value="RGD"/>
</dbReference>
<dbReference type="GO" id="GO:2000463">
    <property type="term" value="P:positive regulation of excitatory postsynaptic potential"/>
    <property type="evidence" value="ECO:0000250"/>
    <property type="project" value="ParkinsonsUK-UCL"/>
</dbReference>
<dbReference type="GO" id="GO:0010628">
    <property type="term" value="P:positive regulation of gene expression"/>
    <property type="evidence" value="ECO:0000250"/>
    <property type="project" value="ParkinsonsUK-UCL"/>
</dbReference>
<dbReference type="GO" id="GO:0097151">
    <property type="term" value="P:positive regulation of inhibitory postsynaptic potential"/>
    <property type="evidence" value="ECO:0000316"/>
    <property type="project" value="ParkinsonsUK-UCL"/>
</dbReference>
<dbReference type="GO" id="GO:0031632">
    <property type="term" value="P:positive regulation of synaptic vesicle fusion to presynaptic active zone membrane"/>
    <property type="evidence" value="ECO:0000303"/>
    <property type="project" value="UniProtKB"/>
</dbReference>
<dbReference type="GO" id="GO:0010808">
    <property type="term" value="P:positive regulation of synaptic vesicle priming"/>
    <property type="evidence" value="ECO:0000316"/>
    <property type="project" value="ParkinsonsUK-UCL"/>
</dbReference>
<dbReference type="GO" id="GO:0099525">
    <property type="term" value="P:presynaptic dense core vesicle exocytosis"/>
    <property type="evidence" value="ECO:0000266"/>
    <property type="project" value="RGD"/>
</dbReference>
<dbReference type="GO" id="GO:0065003">
    <property type="term" value="P:protein-containing complex assembly"/>
    <property type="evidence" value="ECO:0000266"/>
    <property type="project" value="RGD"/>
</dbReference>
<dbReference type="GO" id="GO:0150037">
    <property type="term" value="P:regulation of calcium-dependent activation of synaptic vesicle fusion"/>
    <property type="evidence" value="ECO:0000266"/>
    <property type="project" value="RGD"/>
</dbReference>
<dbReference type="GO" id="GO:0048169">
    <property type="term" value="P:regulation of long-term neuronal synaptic plasticity"/>
    <property type="evidence" value="ECO:0000266"/>
    <property type="project" value="RGD"/>
</dbReference>
<dbReference type="GO" id="GO:0042391">
    <property type="term" value="P:regulation of membrane potential"/>
    <property type="evidence" value="ECO:0000266"/>
    <property type="project" value="RGD"/>
</dbReference>
<dbReference type="GO" id="GO:2000300">
    <property type="term" value="P:regulation of synaptic vesicle exocytosis"/>
    <property type="evidence" value="ECO:0000318"/>
    <property type="project" value="GO_Central"/>
</dbReference>
<dbReference type="GO" id="GO:0061669">
    <property type="term" value="P:spontaneous neurotransmitter secretion"/>
    <property type="evidence" value="ECO:0000266"/>
    <property type="project" value="RGD"/>
</dbReference>
<dbReference type="GO" id="GO:0016081">
    <property type="term" value="P:synaptic vesicle docking"/>
    <property type="evidence" value="ECO:0000266"/>
    <property type="project" value="RGD"/>
</dbReference>
<dbReference type="GO" id="GO:0016082">
    <property type="term" value="P:synaptic vesicle priming"/>
    <property type="evidence" value="ECO:0000266"/>
    <property type="project" value="RGD"/>
</dbReference>
<dbReference type="CDD" id="cd04031">
    <property type="entry name" value="C2A_RIM1alpha"/>
    <property type="match status" value="1"/>
</dbReference>
<dbReference type="CDD" id="cd04028">
    <property type="entry name" value="C2B_RIM1alpha"/>
    <property type="match status" value="1"/>
</dbReference>
<dbReference type="CDD" id="cd06714">
    <property type="entry name" value="PDZ_RIM-like"/>
    <property type="match status" value="1"/>
</dbReference>
<dbReference type="FunFam" id="3.30.40.10:FF:000546">
    <property type="entry name" value="Regulating synaptic membrane exocytosis 1"/>
    <property type="match status" value="1"/>
</dbReference>
<dbReference type="FunFam" id="2.60.40.150:FF:000001">
    <property type="entry name" value="Regulating synaptic membrane exocytosis 3, isoform CRA_a"/>
    <property type="match status" value="1"/>
</dbReference>
<dbReference type="FunFam" id="2.30.42.10:FF:000003">
    <property type="entry name" value="Regulating synaptic membrane exocytosis protein 1, putative"/>
    <property type="match status" value="1"/>
</dbReference>
<dbReference type="FunFam" id="2.60.40.150:FF:000003">
    <property type="entry name" value="Regulating synaptic membrane exocytosis protein 2"/>
    <property type="match status" value="1"/>
</dbReference>
<dbReference type="Gene3D" id="2.30.42.10">
    <property type="match status" value="1"/>
</dbReference>
<dbReference type="Gene3D" id="2.60.40.150">
    <property type="entry name" value="C2 domain"/>
    <property type="match status" value="2"/>
</dbReference>
<dbReference type="Gene3D" id="3.30.40.10">
    <property type="entry name" value="Zinc/RING finger domain, C3HC4 (zinc finger)"/>
    <property type="match status" value="1"/>
</dbReference>
<dbReference type="InterPro" id="IPR000008">
    <property type="entry name" value="C2_dom"/>
</dbReference>
<dbReference type="InterPro" id="IPR035892">
    <property type="entry name" value="C2_domain_sf"/>
</dbReference>
<dbReference type="InterPro" id="IPR001478">
    <property type="entry name" value="PDZ"/>
</dbReference>
<dbReference type="InterPro" id="IPR036034">
    <property type="entry name" value="PDZ_sf"/>
</dbReference>
<dbReference type="InterPro" id="IPR010911">
    <property type="entry name" value="Rab_BD"/>
</dbReference>
<dbReference type="InterPro" id="IPR039032">
    <property type="entry name" value="Rim-like"/>
</dbReference>
<dbReference type="InterPro" id="IPR054386">
    <property type="entry name" value="RIM_Znf"/>
</dbReference>
<dbReference type="InterPro" id="IPR017455">
    <property type="entry name" value="Znf_FYVE-rel"/>
</dbReference>
<dbReference type="InterPro" id="IPR011011">
    <property type="entry name" value="Znf_FYVE_PHD"/>
</dbReference>
<dbReference type="InterPro" id="IPR013083">
    <property type="entry name" value="Znf_RING/FYVE/PHD"/>
</dbReference>
<dbReference type="PANTHER" id="PTHR12157">
    <property type="entry name" value="REGULATING SYNAPTIC MEMBRANE EXOCYTOSIS PROTEIN"/>
    <property type="match status" value="1"/>
</dbReference>
<dbReference type="PANTHER" id="PTHR12157:SF18">
    <property type="entry name" value="REGULATING SYNAPTIC MEMBRANE EXOCYTOSIS PROTEIN 1"/>
    <property type="match status" value="1"/>
</dbReference>
<dbReference type="Pfam" id="PF00168">
    <property type="entry name" value="C2"/>
    <property type="match status" value="2"/>
</dbReference>
<dbReference type="Pfam" id="PF00595">
    <property type="entry name" value="PDZ"/>
    <property type="match status" value="1"/>
</dbReference>
<dbReference type="Pfam" id="PF22601">
    <property type="entry name" value="RIM2a_ZnF"/>
    <property type="match status" value="1"/>
</dbReference>
<dbReference type="SMART" id="SM00239">
    <property type="entry name" value="C2"/>
    <property type="match status" value="2"/>
</dbReference>
<dbReference type="SMART" id="SM00228">
    <property type="entry name" value="PDZ"/>
    <property type="match status" value="1"/>
</dbReference>
<dbReference type="SUPFAM" id="SSF49562">
    <property type="entry name" value="C2 domain (Calcium/lipid-binding domain, CaLB)"/>
    <property type="match status" value="2"/>
</dbReference>
<dbReference type="SUPFAM" id="SSF57903">
    <property type="entry name" value="FYVE/PHD zinc finger"/>
    <property type="match status" value="1"/>
</dbReference>
<dbReference type="SUPFAM" id="SSF50156">
    <property type="entry name" value="PDZ domain-like"/>
    <property type="match status" value="1"/>
</dbReference>
<dbReference type="PROSITE" id="PS50004">
    <property type="entry name" value="C2"/>
    <property type="match status" value="2"/>
</dbReference>
<dbReference type="PROSITE" id="PS50106">
    <property type="entry name" value="PDZ"/>
    <property type="match status" value="1"/>
</dbReference>
<dbReference type="PROSITE" id="PS50916">
    <property type="entry name" value="RABBD"/>
    <property type="match status" value="1"/>
</dbReference>
<dbReference type="PROSITE" id="PS50178">
    <property type="entry name" value="ZF_FYVE"/>
    <property type="match status" value="1"/>
</dbReference>
<keyword id="KW-0002">3D-structure</keyword>
<keyword id="KW-0025">Alternative splicing</keyword>
<keyword id="KW-1003">Cell membrane</keyword>
<keyword id="KW-0966">Cell projection</keyword>
<keyword id="KW-0221">Differentiation</keyword>
<keyword id="KW-0268">Exocytosis</keyword>
<keyword id="KW-0472">Membrane</keyword>
<keyword id="KW-0479">Metal-binding</keyword>
<keyword id="KW-0532">Neurotransmitter transport</keyword>
<keyword id="KW-0597">Phosphoprotein</keyword>
<keyword id="KW-1185">Reference proteome</keyword>
<keyword id="KW-0677">Repeat</keyword>
<keyword id="KW-0770">Synapse</keyword>
<keyword id="KW-0813">Transport</keyword>
<keyword id="KW-0862">Zinc</keyword>
<keyword id="KW-0863">Zinc-finger</keyword>
<comment type="function">
    <text evidence="2 3">Rab effector involved in exocytosis. May act as scaffold protein that regulates neurotransmitter release at the active zone. Essential for maintaining normal probability of neurotransmitter release and for regulating release during short-term synaptic plasticity. Plays a role in dendrite formation by melanocytes.</text>
</comment>
<comment type="subunit">
    <text evidence="1 9 10 11 13 14">Interacts with RAB3C, RAB10, RAB26 and RAB37 (By similarity). Binds SNAP25, SYT1 and CACNA1B. Interaction with SYT1 is enhanced by calcium ions. Interaction with SNAP25 is weaker in the presence of calcium ions. Binds RAB3A, RAB3B and RAB3D that have been activated by GTP-binding. Binds UNC13A. Interacts with TSPOAP1 and RIMBP2. Interacts with PPFIA3 and PPFIA4. Interacts with ERC1.</text>
</comment>
<comment type="interaction">
    <interactant intactId="EBI-3507436">
        <id>Q9JIR4</id>
    </interactant>
    <interactant intactId="EBI-3507514">
        <id>O70368</id>
        <label>Cacna1a</label>
    </interactant>
    <organismsDiffer>false</organismsDiffer>
    <experiments>2</experiments>
</comment>
<comment type="interaction">
    <interactant intactId="EBI-3507436">
        <id>Q9JIR4</id>
    </interactant>
    <interactant intactId="EBI-3507416">
        <id>P54282</id>
        <label>Cacna1a</label>
    </interactant>
    <organismsDiffer>false</organismsDiffer>
    <experiments>4</experiments>
</comment>
<comment type="interaction">
    <interactant intactId="EBI-3507436">
        <id>Q9JIR4</id>
    </interactant>
    <interactant intactId="EBI-3507539">
        <id>O89089</id>
        <label>Cacna1b</label>
    </interactant>
    <organismsDiffer>false</organismsDiffer>
    <experiments>2</experiments>
</comment>
<comment type="interaction">
    <interactant intactId="EBI-3507436">
        <id>Q9JIR4</id>
    </interactant>
    <interactant intactId="EBI-3507502">
        <id>Q811U3</id>
        <label>Erc1</label>
    </interactant>
    <organismsDiffer>false</organismsDiffer>
    <experiments>8</experiments>
</comment>
<comment type="subcellular location">
    <subcellularLocation>
        <location>Cell membrane</location>
        <topology>Peripheral membrane protein</topology>
    </subcellularLocation>
    <subcellularLocation>
        <location>Synapse</location>
    </subcellularLocation>
    <subcellularLocation>
        <location evidence="16">Presynaptic cell membrane</location>
        <topology evidence="16">Peripheral membrane protein</topology>
    </subcellularLocation>
    <text>Associated with plasma membranes from synaptic junctions. Not detected in synaptic vesicles. Detected in presynaptic nerve terminals close to the active zone. Detected in synaptic ribbons of ribbon synapses of retinal photoreceptor cells.</text>
</comment>
<comment type="alternative products">
    <event type="alternative splicing"/>
    <isoform>
        <id>Q9JIR4-1</id>
        <name>1</name>
        <name>Rim1B</name>
        <sequence type="displayed"/>
    </isoform>
    <isoform>
        <id>Q9JIR4-2</id>
        <name>2</name>
        <sequence type="described" ref="VSP_008172"/>
    </isoform>
</comment>
<comment type="tissue specificity">
    <text evidence="9">Highly expressed in hippocampus, brain cortex, cerebellum and olfactory bulb. Detected at lower levels in midbrain, hindbrain and spinal cord. Detected retina and in spinal cord motor neurons.</text>
</comment>
<comment type="PTM">
    <text evidence="12">Phosphorylated by BRSK1.</text>
</comment>
<gene>
    <name type="primary">Rims1</name>
    <name type="synonym">Rim1</name>
</gene>
<organism>
    <name type="scientific">Rattus norvegicus</name>
    <name type="common">Rat</name>
    <dbReference type="NCBI Taxonomy" id="10116"/>
    <lineage>
        <taxon>Eukaryota</taxon>
        <taxon>Metazoa</taxon>
        <taxon>Chordata</taxon>
        <taxon>Craniata</taxon>
        <taxon>Vertebrata</taxon>
        <taxon>Euteleostomi</taxon>
        <taxon>Mammalia</taxon>
        <taxon>Eutheria</taxon>
        <taxon>Euarchontoglires</taxon>
        <taxon>Glires</taxon>
        <taxon>Rodentia</taxon>
        <taxon>Myomorpha</taxon>
        <taxon>Muroidea</taxon>
        <taxon>Muridae</taxon>
        <taxon>Murinae</taxon>
        <taxon>Rattus</taxon>
    </lineage>
</organism>
<protein>
    <recommendedName>
        <fullName>Regulating synaptic membrane exocytosis protein 1</fullName>
    </recommendedName>
    <alternativeName>
        <fullName>Rab-3-interacting molecule 1</fullName>
        <shortName>RIM 1</shortName>
    </alternativeName>
</protein>
<sequence length="1615" mass="179655">MSSAVGPRGPRPPTVPPPMQELPDLSHLTEEERNIIMAVMDRQKEEEEKEEAMLKCVVRDMAKPAACKTPRNAESQPHQPPLNIFRCVCVPRKPSSEEGGPERDWRLHQQFESYKEQVRKIGEEARRYQGEHKDDAPTCGICHKTKFADGCGHLCSYCRTKFCARCGGRVSLRSNNEDKVVMWVCNLCRKQQEILTKSGAWFFGSGPQQPSQDGTLSDTATGAGSEVPREKKARLQERSRSQTPLSTAAVSSQDTATPGAPLHRNKGAEPSQQALGPEQKQASRSRSEPPRERKKAPGLSEQNGKGGQKSERKRVPKSVVQPGEGIADERERKERRETRRLEKGRSQDYSDRPEKRDNGRVAEDQKQRKEEEYQTRYRSDPNLARYPVKAPPEEQQMRMHARVSRARHERRHSDVALPHTEAAAAAPAEATAGKRAPATARVSPPESPRARAAAAQPPTEHGPPPPRPAPGPAEPPEPRVPEPLRKQGRLDPGSAVLLRKAKREKAESMLRNDSLSSDQSESVRPSPPKPHRPKRGGKRRQMSVSSSEEEGVSTPEYTSCEDVELESESVSEKGDLDYYWLDPATWHSRETSPISSHPVTWQPSKEGDRLIGRVILNKRTTMPKESGALLGLKVVGGKMTDLGRLGAFITKVKKGSLADVVGHLRAGDEVLEWNGKPLPGATNEEVYNIILESKSEPQVEIIVSRPIGDIPRIPESSHPPLESSSSSFESQKMERPSISVISPTSPGALKDAPQVLPGQLSVKLWYDKVGHQLIVNVLQATDLPPRVDGRPRNPYVKMYFLPDRSDKSKRRTKTVKKLLEPKWNQTFVYSHVHRRDFRERMLEITVWDQPRVQDEESEFLGEILIELETALLDDEPHWYKLQTHDESSLPLPQPSPFMPRRHIHGESSSKKLQRSQRISDSDISDYEVDDGIGVVPPVGYRASARESKATTLTVPEQQRTTHHRSRSVSPHRGDDQGRPRSRLPNVPLQRSLDEIHPTRRSRSPTRHHDASRSPADHRSRHVESQYSSEPDSELLMLPRAKRGRSAESLHMTSELQPSLDRARSASTNCLRPDTSLHSPERERHSRKSERCSIQKQSRKGTASDADRVLPPCLSRRGYATPRATDQPVVRGKYPTRSRSSEHSSVRTLCSMHHLAPGGSAPPSPLLLTRTHRQGSPTQSPPADTSFGSRRGRQLPQVPVRSGSIEQASLVVEERTRQMKVKVHRFKQTTGSGSSQELDHEQYSKYNIHKDQYRSCDNASAKSSDSDVSDVSAISRASSTSRLSSTSFMSEQSERPRGRISSFTPKMQGRRMGTSGRAIIKSTSVSGEIYTLERNDGSQSDTAVGTVGAGGKKRRSSLSAKVVAIVSRRSRSTSQLSQTESGHKKLKSTIQRSTETGMAAEMRKMVRQPSRESTDGSINSYSSEGNLIFPGVRVGPDSQFSDFLDGLGPAQLVGRQTLATPAMGDIQIGMEDKKGQLEVEVIRARSLTQKPGSKSTPAPYVKVYLLENGACIAKKKTRIARKTLDPLYQQSLVFDESPQGKVLQVIVWGDYGRMDHKCFMGVAQILLEELDLSSMVIGWYKLFPPSSLVDPTLAPLTRRASQSSLESSSGPPCIRS</sequence>
<name>RIMS1_RAT</name>